<protein>
    <recommendedName>
        <fullName evidence="1">Transcriptional repressor NrdR</fullName>
    </recommendedName>
</protein>
<dbReference type="EMBL" id="CP000097">
    <property type="protein sequence ID" value="ABB26823.1"/>
    <property type="molecule type" value="Genomic_DNA"/>
</dbReference>
<dbReference type="RefSeq" id="WP_011360625.1">
    <property type="nucleotide sequence ID" value="NC_007513.1"/>
</dbReference>
<dbReference type="SMR" id="Q3AWE9"/>
<dbReference type="STRING" id="316279.Syncc9902_1866"/>
<dbReference type="KEGG" id="sye:Syncc9902_1866"/>
<dbReference type="eggNOG" id="COG1327">
    <property type="taxonomic scope" value="Bacteria"/>
</dbReference>
<dbReference type="HOGENOM" id="CLU_108412_0_0_3"/>
<dbReference type="OrthoDB" id="9807461at2"/>
<dbReference type="Proteomes" id="UP000002712">
    <property type="component" value="Chromosome"/>
</dbReference>
<dbReference type="GO" id="GO:0005524">
    <property type="term" value="F:ATP binding"/>
    <property type="evidence" value="ECO:0007669"/>
    <property type="project" value="UniProtKB-KW"/>
</dbReference>
<dbReference type="GO" id="GO:0003677">
    <property type="term" value="F:DNA binding"/>
    <property type="evidence" value="ECO:0007669"/>
    <property type="project" value="UniProtKB-KW"/>
</dbReference>
<dbReference type="GO" id="GO:0008270">
    <property type="term" value="F:zinc ion binding"/>
    <property type="evidence" value="ECO:0007669"/>
    <property type="project" value="UniProtKB-UniRule"/>
</dbReference>
<dbReference type="GO" id="GO:0045892">
    <property type="term" value="P:negative regulation of DNA-templated transcription"/>
    <property type="evidence" value="ECO:0007669"/>
    <property type="project" value="UniProtKB-UniRule"/>
</dbReference>
<dbReference type="HAMAP" id="MF_00440">
    <property type="entry name" value="NrdR"/>
    <property type="match status" value="1"/>
</dbReference>
<dbReference type="InterPro" id="IPR005144">
    <property type="entry name" value="ATP-cone_dom"/>
</dbReference>
<dbReference type="InterPro" id="IPR055173">
    <property type="entry name" value="NrdR-like_N"/>
</dbReference>
<dbReference type="InterPro" id="IPR003796">
    <property type="entry name" value="RNR_NrdR-like"/>
</dbReference>
<dbReference type="NCBIfam" id="TIGR00244">
    <property type="entry name" value="transcriptional regulator NrdR"/>
    <property type="match status" value="1"/>
</dbReference>
<dbReference type="PANTHER" id="PTHR30455">
    <property type="entry name" value="TRANSCRIPTIONAL REPRESSOR NRDR"/>
    <property type="match status" value="1"/>
</dbReference>
<dbReference type="PANTHER" id="PTHR30455:SF2">
    <property type="entry name" value="TRANSCRIPTIONAL REPRESSOR NRDR"/>
    <property type="match status" value="1"/>
</dbReference>
<dbReference type="Pfam" id="PF03477">
    <property type="entry name" value="ATP-cone"/>
    <property type="match status" value="1"/>
</dbReference>
<dbReference type="Pfam" id="PF22811">
    <property type="entry name" value="Zn_ribbon_NrdR"/>
    <property type="match status" value="1"/>
</dbReference>
<dbReference type="PROSITE" id="PS51161">
    <property type="entry name" value="ATP_CONE"/>
    <property type="match status" value="1"/>
</dbReference>
<reference key="1">
    <citation type="submission" date="2005-08" db="EMBL/GenBank/DDBJ databases">
        <title>Complete sequence of Synechococcus sp. CC9902.</title>
        <authorList>
            <person name="Copeland A."/>
            <person name="Lucas S."/>
            <person name="Lapidus A."/>
            <person name="Barry K."/>
            <person name="Detter J.C."/>
            <person name="Glavina T."/>
            <person name="Hammon N."/>
            <person name="Israni S."/>
            <person name="Pitluck S."/>
            <person name="Martinez M."/>
            <person name="Schmutz J."/>
            <person name="Larimer F."/>
            <person name="Land M."/>
            <person name="Kyrpides N."/>
            <person name="Ivanova N."/>
            <person name="Richardson P."/>
        </authorList>
    </citation>
    <scope>NUCLEOTIDE SEQUENCE [LARGE SCALE GENOMIC DNA]</scope>
    <source>
        <strain>CC9902</strain>
    </source>
</reference>
<proteinExistence type="inferred from homology"/>
<keyword id="KW-0067">ATP-binding</keyword>
<keyword id="KW-0238">DNA-binding</keyword>
<keyword id="KW-0479">Metal-binding</keyword>
<keyword id="KW-0547">Nucleotide-binding</keyword>
<keyword id="KW-1185">Reference proteome</keyword>
<keyword id="KW-0678">Repressor</keyword>
<keyword id="KW-0804">Transcription</keyword>
<keyword id="KW-0805">Transcription regulation</keyword>
<keyword id="KW-0862">Zinc</keyword>
<keyword id="KW-0863">Zinc-finger</keyword>
<name>NRDR_SYNS9</name>
<sequence length="158" mass="18089">MQCPSCQNTDSRVLESRAADGGRSVRRRRECLNCDFRFTTYERVETVPITVIKRDGCRELFNRTKVLHGLSRACDKTGLDAARLETVVENLELQLQQRTAKEVASSEIGELVLKELKQISEVAYIRFASVYRQFRGIDDFVSTLETMNTEQEHLAAVR</sequence>
<evidence type="ECO:0000255" key="1">
    <source>
        <dbReference type="HAMAP-Rule" id="MF_00440"/>
    </source>
</evidence>
<organism>
    <name type="scientific">Synechococcus sp. (strain CC9902)</name>
    <dbReference type="NCBI Taxonomy" id="316279"/>
    <lineage>
        <taxon>Bacteria</taxon>
        <taxon>Bacillati</taxon>
        <taxon>Cyanobacteriota</taxon>
        <taxon>Cyanophyceae</taxon>
        <taxon>Synechococcales</taxon>
        <taxon>Synechococcaceae</taxon>
        <taxon>Synechococcus</taxon>
    </lineage>
</organism>
<feature type="chain" id="PRO_0000264223" description="Transcriptional repressor NrdR">
    <location>
        <begin position="1"/>
        <end position="158"/>
    </location>
</feature>
<feature type="domain" description="ATP-cone" evidence="1">
    <location>
        <begin position="49"/>
        <end position="139"/>
    </location>
</feature>
<feature type="zinc finger region" evidence="1">
    <location>
        <begin position="3"/>
        <end position="34"/>
    </location>
</feature>
<accession>Q3AWE9</accession>
<comment type="function">
    <text evidence="1">Negatively regulates transcription of bacterial ribonucleotide reductase nrd genes and operons by binding to NrdR-boxes.</text>
</comment>
<comment type="cofactor">
    <cofactor evidence="1">
        <name>Zn(2+)</name>
        <dbReference type="ChEBI" id="CHEBI:29105"/>
    </cofactor>
    <text evidence="1">Binds 1 zinc ion.</text>
</comment>
<comment type="similarity">
    <text evidence="1">Belongs to the NrdR family.</text>
</comment>
<gene>
    <name evidence="1" type="primary">nrdR</name>
    <name type="ordered locus">Syncc9902_1866</name>
</gene>